<evidence type="ECO:0000255" key="1">
    <source>
        <dbReference type="HAMAP-Rule" id="MF_01726"/>
    </source>
</evidence>
<protein>
    <recommendedName>
        <fullName evidence="1">Spermidine/putrescine import ATP-binding protein PotA</fullName>
        <ecNumber evidence="1">7.6.2.11</ecNumber>
    </recommendedName>
</protein>
<organism>
    <name type="scientific">Aster yellows witches'-broom phytoplasma (strain AYWB)</name>
    <dbReference type="NCBI Taxonomy" id="322098"/>
    <lineage>
        <taxon>Bacteria</taxon>
        <taxon>Bacillati</taxon>
        <taxon>Mycoplasmatota</taxon>
        <taxon>Mollicutes</taxon>
        <taxon>Acholeplasmatales</taxon>
        <taxon>Acholeplasmataceae</taxon>
        <taxon>Candidatus Phytoplasma</taxon>
        <taxon>16SrI (Aster yellows group)</taxon>
    </lineage>
</organism>
<reference key="1">
    <citation type="journal article" date="2006" name="J. Bacteriol.">
        <title>Living with genome instability: the adaptation of phytoplasmas to diverse environments of their insect and plant hosts.</title>
        <authorList>
            <person name="Bai X."/>
            <person name="Zhang J."/>
            <person name="Ewing A."/>
            <person name="Miller S.A."/>
            <person name="Jancso Radek A."/>
            <person name="Shevchenko D.V."/>
            <person name="Tsukerman K."/>
            <person name="Walunas T."/>
            <person name="Lapidus A."/>
            <person name="Campbell J.W."/>
            <person name="Hogenhout S.A."/>
        </authorList>
    </citation>
    <scope>NUCLEOTIDE SEQUENCE [LARGE SCALE GENOMIC DNA]</scope>
    <source>
        <strain>AYWB</strain>
    </source>
</reference>
<keyword id="KW-0067">ATP-binding</keyword>
<keyword id="KW-1003">Cell membrane</keyword>
<keyword id="KW-0472">Membrane</keyword>
<keyword id="KW-0547">Nucleotide-binding</keyword>
<keyword id="KW-1278">Translocase</keyword>
<keyword id="KW-0813">Transport</keyword>
<accession>Q2NK31</accession>
<comment type="function">
    <text evidence="1">Part of the ABC transporter complex PotABCD involved in spermidine/putrescine import. Responsible for energy coupling to the transport system.</text>
</comment>
<comment type="catalytic activity">
    <reaction evidence="1">
        <text>ATP + H2O + polyamine-[polyamine-binding protein]Side 1 = ADP + phosphate + polyamineSide 2 + [polyamine-binding protein]Side 1.</text>
        <dbReference type="EC" id="7.6.2.11"/>
    </reaction>
</comment>
<comment type="subunit">
    <text evidence="1">The complex is composed of two ATP-binding proteins (PotA), two transmembrane proteins (PotB and PotC) and a solute-binding protein (PotD).</text>
</comment>
<comment type="subcellular location">
    <subcellularLocation>
        <location evidence="1">Cell membrane</location>
        <topology evidence="1">Peripheral membrane protein</topology>
    </subcellularLocation>
</comment>
<comment type="similarity">
    <text evidence="1">Belongs to the ABC transporter superfamily. Spermidine/putrescine importer (TC 3.A.1.11.1) family.</text>
</comment>
<gene>
    <name evidence="1" type="primary">potA</name>
    <name type="ordered locus">AYWB_095</name>
</gene>
<dbReference type="EC" id="7.6.2.11" evidence="1"/>
<dbReference type="EMBL" id="CP000061">
    <property type="protein sequence ID" value="ABC65212.1"/>
    <property type="molecule type" value="Genomic_DNA"/>
</dbReference>
<dbReference type="RefSeq" id="WP_011412379.1">
    <property type="nucleotide sequence ID" value="NC_007716.1"/>
</dbReference>
<dbReference type="SMR" id="Q2NK31"/>
<dbReference type="STRING" id="322098.AYWB_095"/>
<dbReference type="KEGG" id="ayw:AYWB_095"/>
<dbReference type="eggNOG" id="COG3839">
    <property type="taxonomic scope" value="Bacteria"/>
</dbReference>
<dbReference type="HOGENOM" id="CLU_000604_1_1_14"/>
<dbReference type="OrthoDB" id="9802264at2"/>
<dbReference type="PhylomeDB" id="Q2NK31"/>
<dbReference type="Proteomes" id="UP000001934">
    <property type="component" value="Chromosome"/>
</dbReference>
<dbReference type="GO" id="GO:0043190">
    <property type="term" value="C:ATP-binding cassette (ABC) transporter complex"/>
    <property type="evidence" value="ECO:0007669"/>
    <property type="project" value="InterPro"/>
</dbReference>
<dbReference type="GO" id="GO:0015417">
    <property type="term" value="F:ABC-type polyamine transporter activity"/>
    <property type="evidence" value="ECO:0007669"/>
    <property type="project" value="UniProtKB-EC"/>
</dbReference>
<dbReference type="GO" id="GO:0005524">
    <property type="term" value="F:ATP binding"/>
    <property type="evidence" value="ECO:0007669"/>
    <property type="project" value="UniProtKB-KW"/>
</dbReference>
<dbReference type="GO" id="GO:0016887">
    <property type="term" value="F:ATP hydrolysis activity"/>
    <property type="evidence" value="ECO:0007669"/>
    <property type="project" value="InterPro"/>
</dbReference>
<dbReference type="Gene3D" id="2.40.50.100">
    <property type="match status" value="1"/>
</dbReference>
<dbReference type="Gene3D" id="2.40.50.140">
    <property type="entry name" value="Nucleic acid-binding proteins"/>
    <property type="match status" value="1"/>
</dbReference>
<dbReference type="Gene3D" id="3.40.50.300">
    <property type="entry name" value="P-loop containing nucleotide triphosphate hydrolases"/>
    <property type="match status" value="1"/>
</dbReference>
<dbReference type="InterPro" id="IPR003593">
    <property type="entry name" value="AAA+_ATPase"/>
</dbReference>
<dbReference type="InterPro" id="IPR050093">
    <property type="entry name" value="ABC_SmlMolc_Importer"/>
</dbReference>
<dbReference type="InterPro" id="IPR003439">
    <property type="entry name" value="ABC_transporter-like_ATP-bd"/>
</dbReference>
<dbReference type="InterPro" id="IPR017871">
    <property type="entry name" value="ABC_transporter-like_CS"/>
</dbReference>
<dbReference type="InterPro" id="IPR008995">
    <property type="entry name" value="Mo/tungstate-bd_C_term_dom"/>
</dbReference>
<dbReference type="InterPro" id="IPR012340">
    <property type="entry name" value="NA-bd_OB-fold"/>
</dbReference>
<dbReference type="InterPro" id="IPR027417">
    <property type="entry name" value="P-loop_NTPase"/>
</dbReference>
<dbReference type="InterPro" id="IPR013611">
    <property type="entry name" value="Transp-assoc_OB_typ2"/>
</dbReference>
<dbReference type="PANTHER" id="PTHR42781">
    <property type="entry name" value="SPERMIDINE/PUTRESCINE IMPORT ATP-BINDING PROTEIN POTA"/>
    <property type="match status" value="1"/>
</dbReference>
<dbReference type="PANTHER" id="PTHR42781:SF4">
    <property type="entry name" value="SPERMIDINE_PUTRESCINE IMPORT ATP-BINDING PROTEIN POTA"/>
    <property type="match status" value="1"/>
</dbReference>
<dbReference type="Pfam" id="PF00005">
    <property type="entry name" value="ABC_tran"/>
    <property type="match status" value="1"/>
</dbReference>
<dbReference type="Pfam" id="PF08402">
    <property type="entry name" value="TOBE_2"/>
    <property type="match status" value="1"/>
</dbReference>
<dbReference type="SMART" id="SM00382">
    <property type="entry name" value="AAA"/>
    <property type="match status" value="1"/>
</dbReference>
<dbReference type="SUPFAM" id="SSF50331">
    <property type="entry name" value="MOP-like"/>
    <property type="match status" value="1"/>
</dbReference>
<dbReference type="SUPFAM" id="SSF52540">
    <property type="entry name" value="P-loop containing nucleoside triphosphate hydrolases"/>
    <property type="match status" value="1"/>
</dbReference>
<dbReference type="PROSITE" id="PS00211">
    <property type="entry name" value="ABC_TRANSPORTER_1"/>
    <property type="match status" value="1"/>
</dbReference>
<dbReference type="PROSITE" id="PS50893">
    <property type="entry name" value="ABC_TRANSPORTER_2"/>
    <property type="match status" value="1"/>
</dbReference>
<dbReference type="PROSITE" id="PS51305">
    <property type="entry name" value="POTA"/>
    <property type="match status" value="1"/>
</dbReference>
<feature type="chain" id="PRO_0000286190" description="Spermidine/putrescine import ATP-binding protein PotA">
    <location>
        <begin position="1"/>
        <end position="417"/>
    </location>
</feature>
<feature type="domain" description="ABC transporter" evidence="1">
    <location>
        <begin position="5"/>
        <end position="308"/>
    </location>
</feature>
<feature type="region of interest" description="Insert">
    <location>
        <begin position="105"/>
        <end position="177"/>
    </location>
</feature>
<feature type="binding site" evidence="1">
    <location>
        <begin position="37"/>
        <end position="44"/>
    </location>
    <ligand>
        <name>ATP</name>
        <dbReference type="ChEBI" id="CHEBI:30616"/>
    </ligand>
</feature>
<sequence length="417" mass="47776">MKTLIILKDLTKVFDNQLILRGINLEIKQNEFVTLLGPSGCGKTTILRILGGFENPSSGEVLFQGKSILNVAAHKRPINTVFQKYALFPHLNVFENVAFGLRLKDFNSKIKDNLDINETHYKTSKANLSKTFHQELTKDLAQEKTTQITNNFNNQIEALTKDFEAKQTALKCKKINKKEQEEQIQKEVLKYIKIMGLQGLEKRTIEQLSGGQQQRVAIARALINKPQVLLLDEPLSNLDLKLKQEMQYELKEIQKNSGITFLFVTHDQEEAFTMSDKVVVMNNGEIQQIGSPEDIYNEPANRFVAQFVGESNLIKGVMKDDFLVHFDNQTFNCVDKGFRKEENVDIVIRPEDIDIVYQGKGLITGIVQSIIFKGVHWEIDVKTAQRTYIIHTTDHVELNKKIDITFNPEDIHVMEIW</sequence>
<proteinExistence type="inferred from homology"/>
<name>POTA_AYWBP</name>